<evidence type="ECO:0000250" key="1"/>
<evidence type="ECO:0000255" key="2"/>
<evidence type="ECO:0000255" key="3">
    <source>
        <dbReference type="PROSITE-ProRule" id="PRU01252"/>
    </source>
</evidence>
<evidence type="ECO:0000256" key="4">
    <source>
        <dbReference type="SAM" id="MobiDB-lite"/>
    </source>
</evidence>
<evidence type="ECO:0000269" key="5">
    <source>
    </source>
</evidence>
<evidence type="ECO:0000269" key="6">
    <source>
    </source>
</evidence>
<evidence type="ECO:0000269" key="7">
    <source>
    </source>
</evidence>
<evidence type="ECO:0000269" key="8">
    <source>
    </source>
</evidence>
<evidence type="ECO:0000305" key="9"/>
<protein>
    <recommendedName>
        <fullName>Counting factor 45-1</fullName>
    </recommendedName>
</protein>
<gene>
    <name type="primary">cf45-1</name>
    <name type="synonym">ctnC</name>
    <name type="ORF">DDB_G0269248</name>
</gene>
<organism>
    <name type="scientific">Dictyostelium discoideum</name>
    <name type="common">Social amoeba</name>
    <dbReference type="NCBI Taxonomy" id="44689"/>
    <lineage>
        <taxon>Eukaryota</taxon>
        <taxon>Amoebozoa</taxon>
        <taxon>Evosea</taxon>
        <taxon>Eumycetozoa</taxon>
        <taxon>Dictyostelia</taxon>
        <taxon>Dictyosteliales</taxon>
        <taxon>Dictyosteliaceae</taxon>
        <taxon>Dictyostelium</taxon>
    </lineage>
</organism>
<name>CF451_DICDI</name>
<sequence length="297" mass="29304">MNKLISLLLVCLVAIALVNADCAIDFDSDTVNSVTSSDWSCLAASNDRVIMQVFSGGYGYTSGIASAVQGAQAAGISTIDLYAFLCNQCSGNSPSSSAIQSIVSQLQNDGVSYNMLWIDVEQCDGCWGDLGDNAAFVQEAVETAQNLGVNVGVYSSIGEWSQTVGNLSGLGVDLWYAHYDNNPSFSDSSFYEFGGWTSPTMKQYAGNGNECGVSVDMNFFGSGTCSASTGSGSGSSSGSSSGSSSGSSSGSGSSSGSGSSSGSSSGSGSGSSSSGSGSGSGSSSGSGSSSGSGSGSS</sequence>
<comment type="function">
    <text evidence="1">Cell-counting factor that limits the maximum size of the multicellular structure during aggregation.</text>
</comment>
<comment type="subunit">
    <text evidence="1 5 6 7 8">Monomer (By similarity). Component of the counting factor (CF) complex, which includes cf60, cf50, cf45-1 and ctnA.</text>
</comment>
<comment type="subcellular location">
    <subcellularLocation>
        <location evidence="1">Secreted</location>
    </subcellularLocation>
</comment>
<comment type="developmental stage">
    <text evidence="7">Expressed in vegetative and early developing cells. Increases at 2.5 hours of development, and then decreases slightly. At 10 hours, there is a strong decrease followed by a almost complete decline at 25 hours.</text>
</comment>
<comment type="disruption phenotype">
    <text evidence="7">Formation of large groups.</text>
</comment>
<comment type="similarity">
    <text evidence="3 9">Belongs to the glycosyl hydrolase 25 family.</text>
</comment>
<keyword id="KW-0929">Antimicrobial</keyword>
<keyword id="KW-0081">Bacteriolytic enzyme</keyword>
<keyword id="KW-0325">Glycoprotein</keyword>
<keyword id="KW-0326">Glycosidase</keyword>
<keyword id="KW-0378">Hydrolase</keyword>
<keyword id="KW-1185">Reference proteome</keyword>
<keyword id="KW-0964">Secreted</keyword>
<keyword id="KW-0732">Signal</keyword>
<dbReference type="EMBL" id="AY212268">
    <property type="protein sequence ID" value="AAO52749.1"/>
    <property type="molecule type" value="Genomic_DNA"/>
</dbReference>
<dbReference type="EMBL" id="AAFI02000005">
    <property type="protein sequence ID" value="EAL71974.1"/>
    <property type="molecule type" value="Genomic_DNA"/>
</dbReference>
<dbReference type="RefSeq" id="XP_646164.1">
    <property type="nucleotide sequence ID" value="XM_641072.1"/>
</dbReference>
<dbReference type="SMR" id="Q86HE5"/>
<dbReference type="FunCoup" id="Q86HE5">
    <property type="interactions" value="4"/>
</dbReference>
<dbReference type="STRING" id="44689.Q86HE5"/>
<dbReference type="GlyCosmos" id="Q86HE5">
    <property type="glycosylation" value="1 site, No reported glycans"/>
</dbReference>
<dbReference type="GlyGen" id="Q86HE5">
    <property type="glycosylation" value="1 site"/>
</dbReference>
<dbReference type="PaxDb" id="44689-DDB0191161"/>
<dbReference type="EnsemblProtists" id="EAL71974">
    <property type="protein sequence ID" value="EAL71974"/>
    <property type="gene ID" value="DDB_G0269248"/>
</dbReference>
<dbReference type="GeneID" id="8617116"/>
<dbReference type="KEGG" id="ddi:DDB_G0269248"/>
<dbReference type="dictyBase" id="DDB_G0269248">
    <property type="gene designation" value="cf45-1"/>
</dbReference>
<dbReference type="VEuPathDB" id="AmoebaDB:DDB_G0269248"/>
<dbReference type="eggNOG" id="ENOG502SF04">
    <property type="taxonomic scope" value="Eukaryota"/>
</dbReference>
<dbReference type="HOGENOM" id="CLU_073372_3_0_1"/>
<dbReference type="InParanoid" id="Q86HE5"/>
<dbReference type="OMA" id="WTSPTMK"/>
<dbReference type="PhylomeDB" id="Q86HE5"/>
<dbReference type="PRO" id="PR:Q86HE5"/>
<dbReference type="Proteomes" id="UP000002195">
    <property type="component" value="Chromosome 1"/>
</dbReference>
<dbReference type="GO" id="GO:0005576">
    <property type="term" value="C:extracellular region"/>
    <property type="evidence" value="ECO:0000314"/>
    <property type="project" value="dictyBase"/>
</dbReference>
<dbReference type="GO" id="GO:0003796">
    <property type="term" value="F:lysozyme activity"/>
    <property type="evidence" value="ECO:0000314"/>
    <property type="project" value="dictyBase"/>
</dbReference>
<dbReference type="GO" id="GO:0031152">
    <property type="term" value="P:aggregation involved in sorocarp development"/>
    <property type="evidence" value="ECO:0000315"/>
    <property type="project" value="dictyBase"/>
</dbReference>
<dbReference type="GO" id="GO:0048870">
    <property type="term" value="P:cell motility"/>
    <property type="evidence" value="ECO:0000315"/>
    <property type="project" value="dictyBase"/>
</dbReference>
<dbReference type="GO" id="GO:0016998">
    <property type="term" value="P:cell wall macromolecule catabolic process"/>
    <property type="evidence" value="ECO:0007669"/>
    <property type="project" value="InterPro"/>
</dbReference>
<dbReference type="GO" id="GO:0098609">
    <property type="term" value="P:cell-cell adhesion"/>
    <property type="evidence" value="ECO:0000315"/>
    <property type="project" value="dictyBase"/>
</dbReference>
<dbReference type="GO" id="GO:0042742">
    <property type="term" value="P:defense response to bacterium"/>
    <property type="evidence" value="ECO:0007669"/>
    <property type="project" value="UniProtKB-KW"/>
</dbReference>
<dbReference type="GO" id="GO:0042593">
    <property type="term" value="P:glucose homeostasis"/>
    <property type="evidence" value="ECO:0000315"/>
    <property type="project" value="dictyBase"/>
</dbReference>
<dbReference type="GO" id="GO:0031640">
    <property type="term" value="P:killing of cells of another organism"/>
    <property type="evidence" value="ECO:0007669"/>
    <property type="project" value="UniProtKB-KW"/>
</dbReference>
<dbReference type="GO" id="GO:0009253">
    <property type="term" value="P:peptidoglycan catabolic process"/>
    <property type="evidence" value="ECO:0007669"/>
    <property type="project" value="InterPro"/>
</dbReference>
<dbReference type="GO" id="GO:0007165">
    <property type="term" value="P:signal transduction"/>
    <property type="evidence" value="ECO:0000318"/>
    <property type="project" value="GO_Central"/>
</dbReference>
<dbReference type="CDD" id="cd06416">
    <property type="entry name" value="GH25_Lys1-like"/>
    <property type="match status" value="1"/>
</dbReference>
<dbReference type="FunFam" id="3.20.20.80:FF:000249">
    <property type="entry name" value="Counting factor 50"/>
    <property type="match status" value="1"/>
</dbReference>
<dbReference type="Gene3D" id="3.20.20.80">
    <property type="entry name" value="Glycosidases"/>
    <property type="match status" value="1"/>
</dbReference>
<dbReference type="InterPro" id="IPR051595">
    <property type="entry name" value="GH25_Enzymes"/>
</dbReference>
<dbReference type="InterPro" id="IPR002053">
    <property type="entry name" value="Glyco_hydro_25"/>
</dbReference>
<dbReference type="InterPro" id="IPR017853">
    <property type="entry name" value="Glycoside_hydrolase_SF"/>
</dbReference>
<dbReference type="PANTHER" id="PTHR23208:SF11">
    <property type="entry name" value="COUNTING FACTOR 45-1-RELATED"/>
    <property type="match status" value="1"/>
</dbReference>
<dbReference type="PANTHER" id="PTHR23208">
    <property type="entry name" value="LYSOZYME PROTEIN"/>
    <property type="match status" value="1"/>
</dbReference>
<dbReference type="SUPFAM" id="SSF51445">
    <property type="entry name" value="(Trans)glycosidases"/>
    <property type="match status" value="1"/>
</dbReference>
<dbReference type="PROSITE" id="PS51904">
    <property type="entry name" value="GLYCOSYL_HYDROL_F25_2"/>
    <property type="match status" value="1"/>
</dbReference>
<feature type="signal peptide" evidence="2">
    <location>
        <begin position="1"/>
        <end position="20"/>
    </location>
</feature>
<feature type="chain" id="PRO_0000384449" description="Counting factor 45-1">
    <location>
        <begin position="21"/>
        <end position="297"/>
    </location>
</feature>
<feature type="domain" description="Ch-type lysozyme" evidence="3">
    <location>
        <begin position="24"/>
        <end position="235"/>
    </location>
</feature>
<feature type="region of interest" description="Disordered" evidence="4">
    <location>
        <begin position="231"/>
        <end position="297"/>
    </location>
</feature>
<feature type="region of interest" description="S-G-S motif repeats" evidence="1">
    <location>
        <begin position="231"/>
        <end position="296"/>
    </location>
</feature>
<feature type="compositionally biased region" description="Low complexity" evidence="4">
    <location>
        <begin position="234"/>
        <end position="275"/>
    </location>
</feature>
<feature type="compositionally biased region" description="Gly residues" evidence="4">
    <location>
        <begin position="276"/>
        <end position="297"/>
    </location>
</feature>
<feature type="active site" evidence="3">
    <location>
        <position position="29"/>
    </location>
</feature>
<feature type="active site" evidence="3">
    <location>
        <position position="119"/>
    </location>
</feature>
<feature type="active site" evidence="3">
    <location>
        <position position="121"/>
    </location>
</feature>
<feature type="glycosylation site" description="N-linked (GlcNAc...) asparagine" evidence="2">
    <location>
        <position position="166"/>
    </location>
</feature>
<accession>Q86HE5</accession>
<accession>Q55DG7</accession>
<reference key="1">
    <citation type="journal article" date="2003" name="Eukaryot. Cell">
        <title>CF45-1, a secreted protein which participates in Dictyostelium group size regulation.</title>
        <authorList>
            <person name="Brock D.A."/>
            <person name="Hatton R.D."/>
            <person name="Giurgiutiu D.-V."/>
            <person name="Scott B."/>
            <person name="Jang W."/>
            <person name="Ammann R."/>
            <person name="Gomer R.H."/>
        </authorList>
    </citation>
    <scope>NUCLEOTIDE SEQUENCE [GENOMIC DNA]</scope>
    <scope>DISRUPTION PHENOTYPE</scope>
    <scope>DEVELOPMENTAL STAGE</scope>
    <scope>IDENTIFICATION IN THE CF COMPLEX</scope>
</reference>
<reference key="2">
    <citation type="journal article" date="2005" name="Nature">
        <title>The genome of the social amoeba Dictyostelium discoideum.</title>
        <authorList>
            <person name="Eichinger L."/>
            <person name="Pachebat J.A."/>
            <person name="Gloeckner G."/>
            <person name="Rajandream M.A."/>
            <person name="Sucgang R."/>
            <person name="Berriman M."/>
            <person name="Song J."/>
            <person name="Olsen R."/>
            <person name="Szafranski K."/>
            <person name="Xu Q."/>
            <person name="Tunggal B."/>
            <person name="Kummerfeld S."/>
            <person name="Madera M."/>
            <person name="Konfortov B.A."/>
            <person name="Rivero F."/>
            <person name="Bankier A.T."/>
            <person name="Lehmann R."/>
            <person name="Hamlin N."/>
            <person name="Davies R."/>
            <person name="Gaudet P."/>
            <person name="Fey P."/>
            <person name="Pilcher K."/>
            <person name="Chen G."/>
            <person name="Saunders D."/>
            <person name="Sodergren E.J."/>
            <person name="Davis P."/>
            <person name="Kerhornou A."/>
            <person name="Nie X."/>
            <person name="Hall N."/>
            <person name="Anjard C."/>
            <person name="Hemphill L."/>
            <person name="Bason N."/>
            <person name="Farbrother P."/>
            <person name="Desany B."/>
            <person name="Just E."/>
            <person name="Morio T."/>
            <person name="Rost R."/>
            <person name="Churcher C.M."/>
            <person name="Cooper J."/>
            <person name="Haydock S."/>
            <person name="van Driessche N."/>
            <person name="Cronin A."/>
            <person name="Goodhead I."/>
            <person name="Muzny D.M."/>
            <person name="Mourier T."/>
            <person name="Pain A."/>
            <person name="Lu M."/>
            <person name="Harper D."/>
            <person name="Lindsay R."/>
            <person name="Hauser H."/>
            <person name="James K.D."/>
            <person name="Quiles M."/>
            <person name="Madan Babu M."/>
            <person name="Saito T."/>
            <person name="Buchrieser C."/>
            <person name="Wardroper A."/>
            <person name="Felder M."/>
            <person name="Thangavelu M."/>
            <person name="Johnson D."/>
            <person name="Knights A."/>
            <person name="Loulseged H."/>
            <person name="Mungall K.L."/>
            <person name="Oliver K."/>
            <person name="Price C."/>
            <person name="Quail M.A."/>
            <person name="Urushihara H."/>
            <person name="Hernandez J."/>
            <person name="Rabbinowitsch E."/>
            <person name="Steffen D."/>
            <person name="Sanders M."/>
            <person name="Ma J."/>
            <person name="Kohara Y."/>
            <person name="Sharp S."/>
            <person name="Simmonds M.N."/>
            <person name="Spiegler S."/>
            <person name="Tivey A."/>
            <person name="Sugano S."/>
            <person name="White B."/>
            <person name="Walker D."/>
            <person name="Woodward J.R."/>
            <person name="Winckler T."/>
            <person name="Tanaka Y."/>
            <person name="Shaulsky G."/>
            <person name="Schleicher M."/>
            <person name="Weinstock G.M."/>
            <person name="Rosenthal A."/>
            <person name="Cox E.C."/>
            <person name="Chisholm R.L."/>
            <person name="Gibbs R.A."/>
            <person name="Loomis W.F."/>
            <person name="Platzer M."/>
            <person name="Kay R.R."/>
            <person name="Williams J.G."/>
            <person name="Dear P.H."/>
            <person name="Noegel A.A."/>
            <person name="Barrell B.G."/>
            <person name="Kuspa A."/>
        </authorList>
    </citation>
    <scope>NUCLEOTIDE SEQUENCE [LARGE SCALE GENOMIC DNA]</scope>
    <source>
        <strain>AX4</strain>
    </source>
</reference>
<reference key="3">
    <citation type="journal article" date="1999" name="Genes Dev.">
        <title>A cell-counting factor regulating structure size in Dictyostelium.</title>
        <authorList>
            <person name="Brock D.A."/>
            <person name="Gomer R.H."/>
        </authorList>
    </citation>
    <scope>IDENTIFICATION IN THE CF COMPLEX</scope>
</reference>
<reference key="4">
    <citation type="journal article" date="2002" name="Development">
        <title>The different components of a multisubunit cell number-counting factor have both unique and overlapping functions.</title>
        <authorList>
            <person name="Brock D.A."/>
            <person name="Hatton R.D."/>
            <person name="Giurgiutiu D.-V."/>
            <person name="Scott B."/>
            <person name="Ammann R."/>
            <person name="Gomer R.H."/>
        </authorList>
    </citation>
    <scope>IDENTIFICATION IN THE CF COMPLEX</scope>
</reference>
<reference key="5">
    <citation type="journal article" date="2006" name="Eukaryot. Cell">
        <title>A 60-kilodalton protein component of the counting factor complex regulates group size in Dictyostelium discoideum.</title>
        <authorList>
            <person name="Brock D.A."/>
            <person name="van Egmond W.N."/>
            <person name="Shamoo Y."/>
            <person name="Hatton R.D."/>
            <person name="Gomer R.H."/>
        </authorList>
    </citation>
    <scope>IDENTIFICATION IN THE CF COMPLEX</scope>
</reference>
<proteinExistence type="evidence at protein level"/>